<protein>
    <recommendedName>
        <fullName evidence="1">Ribulose bisphosphate carboxylase large chain</fullName>
        <shortName evidence="1">RuBisCO large subunit</shortName>
        <ecNumber evidence="1">4.1.1.39</ecNumber>
    </recommendedName>
</protein>
<comment type="function">
    <text evidence="1">RuBisCO catalyzes two reactions: the carboxylation of D-ribulose 1,5-bisphosphate, the primary event in carbon dioxide fixation, as well as the oxidative fragmentation of the pentose substrate in the photorespiration process. Both reactions occur simultaneously and in competition at the same active site.</text>
</comment>
<comment type="catalytic activity">
    <reaction evidence="1">
        <text>2 (2R)-3-phosphoglycerate + 2 H(+) = D-ribulose 1,5-bisphosphate + CO2 + H2O</text>
        <dbReference type="Rhea" id="RHEA:23124"/>
        <dbReference type="ChEBI" id="CHEBI:15377"/>
        <dbReference type="ChEBI" id="CHEBI:15378"/>
        <dbReference type="ChEBI" id="CHEBI:16526"/>
        <dbReference type="ChEBI" id="CHEBI:57870"/>
        <dbReference type="ChEBI" id="CHEBI:58272"/>
        <dbReference type="EC" id="4.1.1.39"/>
    </reaction>
</comment>
<comment type="catalytic activity">
    <reaction evidence="1">
        <text>D-ribulose 1,5-bisphosphate + O2 = 2-phosphoglycolate + (2R)-3-phosphoglycerate + 2 H(+)</text>
        <dbReference type="Rhea" id="RHEA:36631"/>
        <dbReference type="ChEBI" id="CHEBI:15378"/>
        <dbReference type="ChEBI" id="CHEBI:15379"/>
        <dbReference type="ChEBI" id="CHEBI:57870"/>
        <dbReference type="ChEBI" id="CHEBI:58033"/>
        <dbReference type="ChEBI" id="CHEBI:58272"/>
    </reaction>
</comment>
<comment type="cofactor">
    <cofactor evidence="1">
        <name>Mg(2+)</name>
        <dbReference type="ChEBI" id="CHEBI:18420"/>
    </cofactor>
    <text evidence="1">Binds 1 Mg(2+) ion per subunit.</text>
</comment>
<comment type="subunit">
    <text evidence="1">Heterohexadecamer of 8 large chains and 8 small chains; disulfide-linked. The disulfide link is formed within the large subunit homodimers.</text>
</comment>
<comment type="subcellular location">
    <subcellularLocation>
        <location>Plastid</location>
        <location>Chloroplast</location>
    </subcellularLocation>
</comment>
<comment type="PTM">
    <text evidence="1">The disulfide bond which can form in the large chain dimeric partners within the hexadecamer appears to be associated with oxidative stress and protein turnover.</text>
</comment>
<comment type="miscellaneous">
    <text evidence="1">The basic functional RuBisCO is composed of a large chain homodimer in a 'head-to-tail' conformation. In form I RuBisCO this homodimer is arranged in a barrel-like tetramer with the small subunits forming a tetrameric 'cap' on each end of the 'barrel'.</text>
</comment>
<comment type="similarity">
    <text evidence="1">Belongs to the RuBisCO large chain family. Type I subfamily.</text>
</comment>
<name>RBL_CLAXA</name>
<evidence type="ECO:0000255" key="1">
    <source>
        <dbReference type="HAMAP-Rule" id="MF_01338"/>
    </source>
</evidence>
<proteinExistence type="evidence at transcript level"/>
<organism>
    <name type="scientific">Clarkia xantiana</name>
    <name type="common">Gunsight clarkia</name>
    <dbReference type="NCBI Taxonomy" id="3938"/>
    <lineage>
        <taxon>Eukaryota</taxon>
        <taxon>Viridiplantae</taxon>
        <taxon>Streptophyta</taxon>
        <taxon>Embryophyta</taxon>
        <taxon>Tracheophyta</taxon>
        <taxon>Spermatophyta</taxon>
        <taxon>Magnoliopsida</taxon>
        <taxon>eudicotyledons</taxon>
        <taxon>Gunneridae</taxon>
        <taxon>Pentapetalae</taxon>
        <taxon>rosids</taxon>
        <taxon>malvids</taxon>
        <taxon>Myrtales</taxon>
        <taxon>Onagraceae</taxon>
        <taxon>Onagroideae</taxon>
        <taxon>Onagreae</taxon>
        <taxon>Clarkia</taxon>
    </lineage>
</organism>
<reference key="1">
    <citation type="journal article" date="1992" name="Science">
        <title>Carnivorous plants: phylogeny and structural evolution.</title>
        <authorList>
            <person name="Albert V.A."/>
            <person name="Williams S.E."/>
            <person name="Chase M.W."/>
        </authorList>
    </citation>
    <scope>NUCLEOTIDE SEQUENCE [GENOMIC DNA]</scope>
</reference>
<reference key="2">
    <citation type="journal article" date="1993" name="Ann. Mo. Bot. Gard.">
        <title>Tribal relationships in Onagraceae: implications from rbcL sequence data.</title>
        <authorList>
            <person name="Conti E."/>
            <person name="Fischbach A."/>
            <person name="Sytsma K.J."/>
        </authorList>
        <dbReference type="AGRICOLA" id="IND93053814"/>
    </citation>
    <scope>NUCLEOTIDE SEQUENCE [MRNA]</scope>
    <source>
        <tissue>Leaf</tissue>
    </source>
</reference>
<geneLocation type="chloroplast"/>
<feature type="propeptide" id="PRO_0000031179" evidence="1">
    <location>
        <begin position="1"/>
        <end position="2"/>
    </location>
</feature>
<feature type="chain" id="PRO_0000031180" description="Ribulose bisphosphate carboxylase large chain">
    <location>
        <begin position="3"/>
        <end position="475"/>
    </location>
</feature>
<feature type="active site" description="Proton acceptor" evidence="1">
    <location>
        <position position="175"/>
    </location>
</feature>
<feature type="active site" description="Proton acceptor" evidence="1">
    <location>
        <position position="294"/>
    </location>
</feature>
<feature type="binding site" description="in homodimeric partner" evidence="1">
    <location>
        <position position="123"/>
    </location>
    <ligand>
        <name>substrate</name>
    </ligand>
</feature>
<feature type="binding site" evidence="1">
    <location>
        <position position="173"/>
    </location>
    <ligand>
        <name>substrate</name>
    </ligand>
</feature>
<feature type="binding site" evidence="1">
    <location>
        <position position="177"/>
    </location>
    <ligand>
        <name>substrate</name>
    </ligand>
</feature>
<feature type="binding site" description="via carbamate group" evidence="1">
    <location>
        <position position="201"/>
    </location>
    <ligand>
        <name>Mg(2+)</name>
        <dbReference type="ChEBI" id="CHEBI:18420"/>
    </ligand>
</feature>
<feature type="binding site" evidence="1">
    <location>
        <position position="203"/>
    </location>
    <ligand>
        <name>Mg(2+)</name>
        <dbReference type="ChEBI" id="CHEBI:18420"/>
    </ligand>
</feature>
<feature type="binding site" evidence="1">
    <location>
        <position position="204"/>
    </location>
    <ligand>
        <name>Mg(2+)</name>
        <dbReference type="ChEBI" id="CHEBI:18420"/>
    </ligand>
</feature>
<feature type="binding site" evidence="1">
    <location>
        <position position="295"/>
    </location>
    <ligand>
        <name>substrate</name>
    </ligand>
</feature>
<feature type="binding site" evidence="1">
    <location>
        <position position="327"/>
    </location>
    <ligand>
        <name>substrate</name>
    </ligand>
</feature>
<feature type="binding site" evidence="1">
    <location>
        <position position="379"/>
    </location>
    <ligand>
        <name>substrate</name>
    </ligand>
</feature>
<feature type="site" description="Transition state stabilizer" evidence="1">
    <location>
        <position position="334"/>
    </location>
</feature>
<feature type="modified residue" description="N-acetylproline" evidence="1">
    <location>
        <position position="3"/>
    </location>
</feature>
<feature type="modified residue" description="N6,N6,N6-trimethyllysine" evidence="1">
    <location>
        <position position="14"/>
    </location>
</feature>
<feature type="modified residue" description="N6-carboxylysine" evidence="1">
    <location>
        <position position="201"/>
    </location>
</feature>
<feature type="disulfide bond" description="Interchain; in linked form" evidence="1">
    <location>
        <position position="247"/>
    </location>
</feature>
<gene>
    <name evidence="1" type="primary">rbcL</name>
</gene>
<sequence length="475" mass="52773">MSPQTETKASVGFKAGVKDYKLTYYTPEYETKDTDILAAFRVTPQPGVPPEEAGAAVAAESSTGTWTTVWTDGLTSLDRYKGRCYHIEPVAGEENQYICYVAYPLDLFEEGSVTNMFTSIEGNVFGFKALRALRLEDLRIPPAYVKTFQGPPHGIQVERDKLNKYGRPLLGCTIKPKLGLSAKNYGRAVYECLRGGLDFTKDDENVNSQPFMRWRDRFLFCAEAIYKAQAETGEXKGHYLNATAGTCEEMIKRAVFARELGVPIVMHDYLTGGFTANTSLAHYCRDNGLLLHIHRAMHAVIDRQKNHGIHFRVLAKALRMSGGDHIHSGTVVGKLEGERDITLGFVDLLRDDFIEKDRSRGIYFTQDWVSLPGVLPVASGGIHVWHMPALTEIFGDDSVLQFGGGTLGHPWGNAPGAVANRVALEACVQARNEGRDLAREGNEIIREACKWSPELAAACEVWKEIKFEFQAMDTL</sequence>
<keyword id="KW-0007">Acetylation</keyword>
<keyword id="KW-0113">Calvin cycle</keyword>
<keyword id="KW-0120">Carbon dioxide fixation</keyword>
<keyword id="KW-0150">Chloroplast</keyword>
<keyword id="KW-1015">Disulfide bond</keyword>
<keyword id="KW-0456">Lyase</keyword>
<keyword id="KW-0460">Magnesium</keyword>
<keyword id="KW-0479">Metal-binding</keyword>
<keyword id="KW-0488">Methylation</keyword>
<keyword id="KW-0503">Monooxygenase</keyword>
<keyword id="KW-0560">Oxidoreductase</keyword>
<keyword id="KW-0601">Photorespiration</keyword>
<keyword id="KW-0602">Photosynthesis</keyword>
<keyword id="KW-0934">Plastid</keyword>
<accession>P28392</accession>
<dbReference type="EC" id="4.1.1.39" evidence="1"/>
<dbReference type="EMBL" id="L01896">
    <property type="protein sequence ID" value="AAB05339.1"/>
    <property type="molecule type" value="Genomic_DNA"/>
</dbReference>
<dbReference type="EMBL" id="L10225">
    <property type="protein sequence ID" value="AAB05340.1"/>
    <property type="molecule type" value="mRNA"/>
</dbReference>
<dbReference type="GO" id="GO:0009507">
    <property type="term" value="C:chloroplast"/>
    <property type="evidence" value="ECO:0007669"/>
    <property type="project" value="UniProtKB-SubCell"/>
</dbReference>
<dbReference type="GO" id="GO:0000287">
    <property type="term" value="F:magnesium ion binding"/>
    <property type="evidence" value="ECO:0007669"/>
    <property type="project" value="UniProtKB-UniRule"/>
</dbReference>
<dbReference type="GO" id="GO:0004497">
    <property type="term" value="F:monooxygenase activity"/>
    <property type="evidence" value="ECO:0007669"/>
    <property type="project" value="UniProtKB-KW"/>
</dbReference>
<dbReference type="GO" id="GO:0016984">
    <property type="term" value="F:ribulose-bisphosphate carboxylase activity"/>
    <property type="evidence" value="ECO:0007669"/>
    <property type="project" value="UniProtKB-UniRule"/>
</dbReference>
<dbReference type="GO" id="GO:0009853">
    <property type="term" value="P:photorespiration"/>
    <property type="evidence" value="ECO:0007669"/>
    <property type="project" value="UniProtKB-KW"/>
</dbReference>
<dbReference type="GO" id="GO:0019253">
    <property type="term" value="P:reductive pentose-phosphate cycle"/>
    <property type="evidence" value="ECO:0007669"/>
    <property type="project" value="UniProtKB-UniRule"/>
</dbReference>
<dbReference type="CDD" id="cd08212">
    <property type="entry name" value="RuBisCO_large_I"/>
    <property type="match status" value="1"/>
</dbReference>
<dbReference type="FunFam" id="3.20.20.110:FF:000001">
    <property type="entry name" value="Ribulose bisphosphate carboxylase large chain"/>
    <property type="match status" value="1"/>
</dbReference>
<dbReference type="FunFam" id="3.30.70.150:FF:000001">
    <property type="entry name" value="Ribulose bisphosphate carboxylase large chain"/>
    <property type="match status" value="1"/>
</dbReference>
<dbReference type="Gene3D" id="3.20.20.110">
    <property type="entry name" value="Ribulose bisphosphate carboxylase, large subunit, C-terminal domain"/>
    <property type="match status" value="1"/>
</dbReference>
<dbReference type="Gene3D" id="3.30.70.150">
    <property type="entry name" value="RuBisCO large subunit, N-terminal domain"/>
    <property type="match status" value="1"/>
</dbReference>
<dbReference type="HAMAP" id="MF_01338">
    <property type="entry name" value="RuBisCO_L_type1"/>
    <property type="match status" value="1"/>
</dbReference>
<dbReference type="InterPro" id="IPR033966">
    <property type="entry name" value="RuBisCO"/>
</dbReference>
<dbReference type="InterPro" id="IPR020878">
    <property type="entry name" value="RuBisCo_large_chain_AS"/>
</dbReference>
<dbReference type="InterPro" id="IPR000685">
    <property type="entry name" value="RuBisCO_lsu_C"/>
</dbReference>
<dbReference type="InterPro" id="IPR036376">
    <property type="entry name" value="RuBisCO_lsu_C_sf"/>
</dbReference>
<dbReference type="InterPro" id="IPR017443">
    <property type="entry name" value="RuBisCO_lsu_fd_N"/>
</dbReference>
<dbReference type="InterPro" id="IPR036422">
    <property type="entry name" value="RuBisCO_lsu_N_sf"/>
</dbReference>
<dbReference type="InterPro" id="IPR020888">
    <property type="entry name" value="RuBisCO_lsuI"/>
</dbReference>
<dbReference type="NCBIfam" id="NF003252">
    <property type="entry name" value="PRK04208.1"/>
    <property type="match status" value="1"/>
</dbReference>
<dbReference type="PANTHER" id="PTHR42704">
    <property type="entry name" value="RIBULOSE BISPHOSPHATE CARBOXYLASE"/>
    <property type="match status" value="1"/>
</dbReference>
<dbReference type="PANTHER" id="PTHR42704:SF15">
    <property type="entry name" value="RIBULOSE BISPHOSPHATE CARBOXYLASE LARGE CHAIN"/>
    <property type="match status" value="1"/>
</dbReference>
<dbReference type="Pfam" id="PF00016">
    <property type="entry name" value="RuBisCO_large"/>
    <property type="match status" value="1"/>
</dbReference>
<dbReference type="Pfam" id="PF02788">
    <property type="entry name" value="RuBisCO_large_N"/>
    <property type="match status" value="1"/>
</dbReference>
<dbReference type="SFLD" id="SFLDG01052">
    <property type="entry name" value="RuBisCO"/>
    <property type="match status" value="1"/>
</dbReference>
<dbReference type="SFLD" id="SFLDS00014">
    <property type="entry name" value="RuBisCO"/>
    <property type="match status" value="1"/>
</dbReference>
<dbReference type="SFLD" id="SFLDG00301">
    <property type="entry name" value="RuBisCO-like_proteins"/>
    <property type="match status" value="1"/>
</dbReference>
<dbReference type="SUPFAM" id="SSF51649">
    <property type="entry name" value="RuBisCo, C-terminal domain"/>
    <property type="match status" value="1"/>
</dbReference>
<dbReference type="SUPFAM" id="SSF54966">
    <property type="entry name" value="RuBisCO, large subunit, small (N-terminal) domain"/>
    <property type="match status" value="1"/>
</dbReference>
<dbReference type="PROSITE" id="PS00157">
    <property type="entry name" value="RUBISCO_LARGE"/>
    <property type="match status" value="1"/>
</dbReference>